<accession>P60850</accession>
<protein>
    <recommendedName>
        <fullName evidence="1">DNA/RNA-binding protein Alba</fullName>
    </recommendedName>
</protein>
<reference key="1">
    <citation type="journal article" date="2004" name="J. Bacteriol.">
        <title>Complete genome sequence of the genetically tractable hydrogenotrophic methanogen Methanococcus maripaludis.</title>
        <authorList>
            <person name="Hendrickson E.L."/>
            <person name="Kaul R."/>
            <person name="Zhou Y."/>
            <person name="Bovee D."/>
            <person name="Chapman P."/>
            <person name="Chung J."/>
            <person name="Conway de Macario E."/>
            <person name="Dodsworth J.A."/>
            <person name="Gillett W."/>
            <person name="Graham D.E."/>
            <person name="Hackett M."/>
            <person name="Haydock A.K."/>
            <person name="Kang A."/>
            <person name="Land M.L."/>
            <person name="Levy R."/>
            <person name="Lie T.J."/>
            <person name="Major T.A."/>
            <person name="Moore B.C."/>
            <person name="Porat I."/>
            <person name="Palmeiri A."/>
            <person name="Rouse G."/>
            <person name="Saenphimmachak C."/>
            <person name="Soell D."/>
            <person name="Van Dien S."/>
            <person name="Wang T."/>
            <person name="Whitman W.B."/>
            <person name="Xia Q."/>
            <person name="Zhang Y."/>
            <person name="Larimer F.W."/>
            <person name="Olson M.V."/>
            <person name="Leigh J.A."/>
        </authorList>
    </citation>
    <scope>NUCLEOTIDE SEQUENCE [LARGE SCALE GENOMIC DNA]</scope>
    <source>
        <strain>DSM 14266 / JCM 13030 / NBRC 101832 / S2 / LL</strain>
    </source>
</reference>
<dbReference type="EMBL" id="BX950229">
    <property type="protein sequence ID" value="CAF31169.1"/>
    <property type="molecule type" value="Genomic_DNA"/>
</dbReference>
<dbReference type="RefSeq" id="WP_011171557.1">
    <property type="nucleotide sequence ID" value="NC_005791.1"/>
</dbReference>
<dbReference type="SMR" id="P60850"/>
<dbReference type="STRING" id="267377.MMP1613"/>
<dbReference type="EnsemblBacteria" id="CAF31169">
    <property type="protein sequence ID" value="CAF31169"/>
    <property type="gene ID" value="MMP1613"/>
</dbReference>
<dbReference type="GeneID" id="2761577"/>
<dbReference type="KEGG" id="mmp:MMP1613"/>
<dbReference type="PATRIC" id="fig|267377.15.peg.1652"/>
<dbReference type="eggNOG" id="arCOG01753">
    <property type="taxonomic scope" value="Archaea"/>
</dbReference>
<dbReference type="HOGENOM" id="CLU_110989_1_0_2"/>
<dbReference type="OrthoDB" id="10360at2157"/>
<dbReference type="Proteomes" id="UP000000590">
    <property type="component" value="Chromosome"/>
</dbReference>
<dbReference type="GO" id="GO:0005694">
    <property type="term" value="C:chromosome"/>
    <property type="evidence" value="ECO:0007669"/>
    <property type="project" value="UniProtKB-SubCell"/>
</dbReference>
<dbReference type="GO" id="GO:0005737">
    <property type="term" value="C:cytoplasm"/>
    <property type="evidence" value="ECO:0007669"/>
    <property type="project" value="UniProtKB-SubCell"/>
</dbReference>
<dbReference type="GO" id="GO:0003690">
    <property type="term" value="F:double-stranded DNA binding"/>
    <property type="evidence" value="ECO:0007669"/>
    <property type="project" value="UniProtKB-UniRule"/>
</dbReference>
<dbReference type="GO" id="GO:0003723">
    <property type="term" value="F:RNA binding"/>
    <property type="evidence" value="ECO:0007669"/>
    <property type="project" value="InterPro"/>
</dbReference>
<dbReference type="GO" id="GO:0030261">
    <property type="term" value="P:chromosome condensation"/>
    <property type="evidence" value="ECO:0007669"/>
    <property type="project" value="UniProtKB-KW"/>
</dbReference>
<dbReference type="Gene3D" id="3.30.110.20">
    <property type="entry name" value="Alba-like domain"/>
    <property type="match status" value="1"/>
</dbReference>
<dbReference type="HAMAP" id="MF_01122">
    <property type="entry name" value="AlbA"/>
    <property type="match status" value="1"/>
</dbReference>
<dbReference type="InterPro" id="IPR036882">
    <property type="entry name" value="Alba-like_dom_sf"/>
</dbReference>
<dbReference type="InterPro" id="IPR013795">
    <property type="entry name" value="DNA/RNA-bd_Alba"/>
</dbReference>
<dbReference type="InterPro" id="IPR002775">
    <property type="entry name" value="DNA/RNA-bd_Alba-like"/>
</dbReference>
<dbReference type="NCBIfam" id="TIGR00285">
    <property type="entry name" value="DNA-binding protein Alba"/>
    <property type="match status" value="1"/>
</dbReference>
<dbReference type="NCBIfam" id="NF003088">
    <property type="entry name" value="PRK04015.1"/>
    <property type="match status" value="1"/>
</dbReference>
<dbReference type="Pfam" id="PF01918">
    <property type="entry name" value="Alba"/>
    <property type="match status" value="1"/>
</dbReference>
<dbReference type="PIRSF" id="PIRSF028732">
    <property type="entry name" value="Alba"/>
    <property type="match status" value="1"/>
</dbReference>
<dbReference type="SUPFAM" id="SSF82704">
    <property type="entry name" value="AlbA-like"/>
    <property type="match status" value="1"/>
</dbReference>
<comment type="function">
    <text evidence="1">Binds double-stranded DNA tightly but without sequence specificity. Involved in DNA compaction.</text>
</comment>
<comment type="subcellular location">
    <subcellularLocation>
        <location evidence="1">Cytoplasm</location>
    </subcellularLocation>
    <subcellularLocation>
        <location evidence="1">Chromosome</location>
    </subcellularLocation>
</comment>
<comment type="similarity">
    <text evidence="1">Belongs to the histone-like Alba family.</text>
</comment>
<name>ALBA_METMP</name>
<gene>
    <name evidence="1" type="primary">albA</name>
    <name type="ordered locus">MMP1613</name>
</gene>
<proteinExistence type="inferred from homology"/>
<organism>
    <name type="scientific">Methanococcus maripaludis (strain DSM 14266 / JCM 13030 / NBRC 101832 / S2 / LL)</name>
    <dbReference type="NCBI Taxonomy" id="267377"/>
    <lineage>
        <taxon>Archaea</taxon>
        <taxon>Methanobacteriati</taxon>
        <taxon>Methanobacteriota</taxon>
        <taxon>Methanomada group</taxon>
        <taxon>Methanococci</taxon>
        <taxon>Methanococcales</taxon>
        <taxon>Methanococcaceae</taxon>
        <taxon>Methanococcus</taxon>
    </lineage>
</organism>
<feature type="chain" id="PRO_0000151701" description="DNA/RNA-binding protein Alba">
    <location>
        <begin position="1"/>
        <end position="89"/>
    </location>
</feature>
<sequence length="89" mass="9940">MDNIVYVGNKGVMNYVLAVITQFNSENAQEVIVKARGKAISRAVDVEEMVTKRFMPEVKIKEINLGTDHIQGEDGKSINVSTIEIILFK</sequence>
<keyword id="KW-0158">Chromosome</keyword>
<keyword id="KW-0963">Cytoplasm</keyword>
<keyword id="KW-0226">DNA condensation</keyword>
<keyword id="KW-0238">DNA-binding</keyword>
<keyword id="KW-1185">Reference proteome</keyword>
<evidence type="ECO:0000255" key="1">
    <source>
        <dbReference type="HAMAP-Rule" id="MF_01122"/>
    </source>
</evidence>